<accession>Q0JP11</accession>
<accession>B7EJE2</accession>
<comment type="sequence caution" evidence="3">
    <conflict type="erroneous gene model prediction">
        <sequence resource="EMBL-CDS" id="BAF04517"/>
    </conflict>
</comment>
<dbReference type="EMBL" id="AP008207">
    <property type="protein sequence ID" value="BAF04517.1"/>
    <property type="status" value="ALT_SEQ"/>
    <property type="molecule type" value="Genomic_DNA"/>
</dbReference>
<dbReference type="EMBL" id="AP014957">
    <property type="protein sequence ID" value="BAS71356.1"/>
    <property type="molecule type" value="Genomic_DNA"/>
</dbReference>
<dbReference type="EMBL" id="CM000138">
    <property type="protein sequence ID" value="EEE54245.1"/>
    <property type="molecule type" value="Genomic_DNA"/>
</dbReference>
<dbReference type="EMBL" id="AK071420">
    <property type="protein sequence ID" value="BAG92489.1"/>
    <property type="molecule type" value="mRNA"/>
</dbReference>
<dbReference type="RefSeq" id="XP_015610914.1">
    <property type="nucleotide sequence ID" value="XM_015755428.1"/>
</dbReference>
<dbReference type="SMR" id="Q0JP11"/>
<dbReference type="FunCoup" id="Q0JP11">
    <property type="interactions" value="50"/>
</dbReference>
<dbReference type="STRING" id="39947.Q0JP11"/>
<dbReference type="PaxDb" id="39947-Q0JP11"/>
<dbReference type="EnsemblPlants" id="Os01t0252200-01">
    <property type="protein sequence ID" value="Os01t0252200-01"/>
    <property type="gene ID" value="Os01g0252200"/>
</dbReference>
<dbReference type="Gramene" id="Os01t0252200-01">
    <property type="protein sequence ID" value="Os01t0252200-01"/>
    <property type="gene ID" value="Os01g0252200"/>
</dbReference>
<dbReference type="KEGG" id="dosa:Os01g0252200"/>
<dbReference type="eggNOG" id="KOG3454">
    <property type="taxonomic scope" value="Eukaryota"/>
</dbReference>
<dbReference type="HOGENOM" id="CLU_100385_0_0_1"/>
<dbReference type="InParanoid" id="Q0JP11"/>
<dbReference type="OMA" id="WPPIQEL"/>
<dbReference type="OrthoDB" id="2417221at2759"/>
<dbReference type="Proteomes" id="UP000000763">
    <property type="component" value="Chromosome 1"/>
</dbReference>
<dbReference type="Proteomes" id="UP000007752">
    <property type="component" value="Chromosome 1"/>
</dbReference>
<dbReference type="Proteomes" id="UP000059680">
    <property type="component" value="Chromosome 1"/>
</dbReference>
<dbReference type="GO" id="GO:0005689">
    <property type="term" value="C:U12-type spliceosomal complex"/>
    <property type="evidence" value="ECO:0000318"/>
    <property type="project" value="GO_Central"/>
</dbReference>
<dbReference type="GO" id="GO:0003677">
    <property type="term" value="F:DNA binding"/>
    <property type="evidence" value="ECO:0007669"/>
    <property type="project" value="UniProtKB-KW"/>
</dbReference>
<dbReference type="GO" id="GO:0008270">
    <property type="term" value="F:zinc ion binding"/>
    <property type="evidence" value="ECO:0007669"/>
    <property type="project" value="UniProtKB-KW"/>
</dbReference>
<dbReference type="FunFam" id="3.30.160.60:FF:001849">
    <property type="entry name" value="Zinc finger CCCH domain-containing protein 3"/>
    <property type="match status" value="1"/>
</dbReference>
<dbReference type="FunFam" id="4.10.1000.10:FF:000061">
    <property type="entry name" value="Zinc finger CCCH domain-containing protein 3"/>
    <property type="match status" value="1"/>
</dbReference>
<dbReference type="Gene3D" id="3.30.160.60">
    <property type="entry name" value="Classic Zinc Finger"/>
    <property type="match status" value="1"/>
</dbReference>
<dbReference type="Gene3D" id="4.10.1000.10">
    <property type="entry name" value="Zinc finger, CCCH-type"/>
    <property type="match status" value="1"/>
</dbReference>
<dbReference type="InterPro" id="IPR003604">
    <property type="entry name" value="Matrin/U1-like-C_Znf_C2H2"/>
</dbReference>
<dbReference type="InterPro" id="IPR013085">
    <property type="entry name" value="U1-CZ_Znf_C2H2"/>
</dbReference>
<dbReference type="InterPro" id="IPR036236">
    <property type="entry name" value="Znf_C2H2_sf"/>
</dbReference>
<dbReference type="InterPro" id="IPR000571">
    <property type="entry name" value="Znf_CCCH"/>
</dbReference>
<dbReference type="InterPro" id="IPR036855">
    <property type="entry name" value="Znf_CCCH_sf"/>
</dbReference>
<dbReference type="PANTHER" id="PTHR16465">
    <property type="entry name" value="NUCLEASE-RELATED"/>
    <property type="match status" value="1"/>
</dbReference>
<dbReference type="PANTHER" id="PTHR16465:SF0">
    <property type="entry name" value="ZINC FINGER MATRIN-TYPE PROTEIN 5"/>
    <property type="match status" value="1"/>
</dbReference>
<dbReference type="Pfam" id="PF00642">
    <property type="entry name" value="zf-CCCH"/>
    <property type="match status" value="1"/>
</dbReference>
<dbReference type="Pfam" id="PF06220">
    <property type="entry name" value="zf-U1"/>
    <property type="match status" value="1"/>
</dbReference>
<dbReference type="SMART" id="SM00356">
    <property type="entry name" value="ZnF_C3H1"/>
    <property type="match status" value="1"/>
</dbReference>
<dbReference type="SMART" id="SM00451">
    <property type="entry name" value="ZnF_U1"/>
    <property type="match status" value="1"/>
</dbReference>
<dbReference type="SUPFAM" id="SSF57667">
    <property type="entry name" value="beta-beta-alpha zinc fingers"/>
    <property type="match status" value="1"/>
</dbReference>
<dbReference type="SUPFAM" id="SSF90229">
    <property type="entry name" value="CCCH zinc finger"/>
    <property type="match status" value="1"/>
</dbReference>
<dbReference type="PROSITE" id="PS50103">
    <property type="entry name" value="ZF_C3H1"/>
    <property type="match status" value="1"/>
</dbReference>
<sequence length="167" mass="17888">MPLGKYYCDYCEKQFQDTPAARKRHLDGAQHHRARALWYDAVRRQELHGGGGGAPPLLHQPGAAAIGVCQHFVRTGTCKFGDSCRYFHPKPPPANPGPAPSGPVSGPMAQQSNIQGSQPNFVGYQAADGSSFSGNILGGHTSWGNLPPSLRPPPEGGYPPFPFVDWG</sequence>
<organism>
    <name type="scientific">Oryza sativa subsp. japonica</name>
    <name type="common">Rice</name>
    <dbReference type="NCBI Taxonomy" id="39947"/>
    <lineage>
        <taxon>Eukaryota</taxon>
        <taxon>Viridiplantae</taxon>
        <taxon>Streptophyta</taxon>
        <taxon>Embryophyta</taxon>
        <taxon>Tracheophyta</taxon>
        <taxon>Spermatophyta</taxon>
        <taxon>Magnoliopsida</taxon>
        <taxon>Liliopsida</taxon>
        <taxon>Poales</taxon>
        <taxon>Poaceae</taxon>
        <taxon>BOP clade</taxon>
        <taxon>Oryzoideae</taxon>
        <taxon>Oryzeae</taxon>
        <taxon>Oryzinae</taxon>
        <taxon>Oryza</taxon>
        <taxon>Oryza sativa</taxon>
    </lineage>
</organism>
<reference key="1">
    <citation type="journal article" date="2005" name="Nature">
        <title>The map-based sequence of the rice genome.</title>
        <authorList>
            <consortium name="International rice genome sequencing project (IRGSP)"/>
        </authorList>
    </citation>
    <scope>NUCLEOTIDE SEQUENCE [LARGE SCALE GENOMIC DNA]</scope>
    <source>
        <strain>cv. Nipponbare</strain>
    </source>
</reference>
<reference key="2">
    <citation type="journal article" date="2008" name="Nucleic Acids Res.">
        <title>The rice annotation project database (RAP-DB): 2008 update.</title>
        <authorList>
            <consortium name="The rice annotation project (RAP)"/>
        </authorList>
    </citation>
    <scope>GENOME REANNOTATION</scope>
    <source>
        <strain>cv. Nipponbare</strain>
    </source>
</reference>
<reference key="3">
    <citation type="journal article" date="2013" name="Rice">
        <title>Improvement of the Oryza sativa Nipponbare reference genome using next generation sequence and optical map data.</title>
        <authorList>
            <person name="Kawahara Y."/>
            <person name="de la Bastide M."/>
            <person name="Hamilton J.P."/>
            <person name="Kanamori H."/>
            <person name="McCombie W.R."/>
            <person name="Ouyang S."/>
            <person name="Schwartz D.C."/>
            <person name="Tanaka T."/>
            <person name="Wu J."/>
            <person name="Zhou S."/>
            <person name="Childs K.L."/>
            <person name="Davidson R.M."/>
            <person name="Lin H."/>
            <person name="Quesada-Ocampo L."/>
            <person name="Vaillancourt B."/>
            <person name="Sakai H."/>
            <person name="Lee S.S."/>
            <person name="Kim J."/>
            <person name="Numa H."/>
            <person name="Itoh T."/>
            <person name="Buell C.R."/>
            <person name="Matsumoto T."/>
        </authorList>
    </citation>
    <scope>GENOME REANNOTATION</scope>
    <source>
        <strain>cv. Nipponbare</strain>
    </source>
</reference>
<reference key="4">
    <citation type="journal article" date="2005" name="PLoS Biol.">
        <title>The genomes of Oryza sativa: a history of duplications.</title>
        <authorList>
            <person name="Yu J."/>
            <person name="Wang J."/>
            <person name="Lin W."/>
            <person name="Li S."/>
            <person name="Li H."/>
            <person name="Zhou J."/>
            <person name="Ni P."/>
            <person name="Dong W."/>
            <person name="Hu S."/>
            <person name="Zeng C."/>
            <person name="Zhang J."/>
            <person name="Zhang Y."/>
            <person name="Li R."/>
            <person name="Xu Z."/>
            <person name="Li S."/>
            <person name="Li X."/>
            <person name="Zheng H."/>
            <person name="Cong L."/>
            <person name="Lin L."/>
            <person name="Yin J."/>
            <person name="Geng J."/>
            <person name="Li G."/>
            <person name="Shi J."/>
            <person name="Liu J."/>
            <person name="Lv H."/>
            <person name="Li J."/>
            <person name="Wang J."/>
            <person name="Deng Y."/>
            <person name="Ran L."/>
            <person name="Shi X."/>
            <person name="Wang X."/>
            <person name="Wu Q."/>
            <person name="Li C."/>
            <person name="Ren X."/>
            <person name="Wang J."/>
            <person name="Wang X."/>
            <person name="Li D."/>
            <person name="Liu D."/>
            <person name="Zhang X."/>
            <person name="Ji Z."/>
            <person name="Zhao W."/>
            <person name="Sun Y."/>
            <person name="Zhang Z."/>
            <person name="Bao J."/>
            <person name="Han Y."/>
            <person name="Dong L."/>
            <person name="Ji J."/>
            <person name="Chen P."/>
            <person name="Wu S."/>
            <person name="Liu J."/>
            <person name="Xiao Y."/>
            <person name="Bu D."/>
            <person name="Tan J."/>
            <person name="Yang L."/>
            <person name="Ye C."/>
            <person name="Zhang J."/>
            <person name="Xu J."/>
            <person name="Zhou Y."/>
            <person name="Yu Y."/>
            <person name="Zhang B."/>
            <person name="Zhuang S."/>
            <person name="Wei H."/>
            <person name="Liu B."/>
            <person name="Lei M."/>
            <person name="Yu H."/>
            <person name="Li Y."/>
            <person name="Xu H."/>
            <person name="Wei S."/>
            <person name="He X."/>
            <person name="Fang L."/>
            <person name="Zhang Z."/>
            <person name="Zhang Y."/>
            <person name="Huang X."/>
            <person name="Su Z."/>
            <person name="Tong W."/>
            <person name="Li J."/>
            <person name="Tong Z."/>
            <person name="Li S."/>
            <person name="Ye J."/>
            <person name="Wang L."/>
            <person name="Fang L."/>
            <person name="Lei T."/>
            <person name="Chen C.-S."/>
            <person name="Chen H.-C."/>
            <person name="Xu Z."/>
            <person name="Li H."/>
            <person name="Huang H."/>
            <person name="Zhang F."/>
            <person name="Xu H."/>
            <person name="Li N."/>
            <person name="Zhao C."/>
            <person name="Li S."/>
            <person name="Dong L."/>
            <person name="Huang Y."/>
            <person name="Li L."/>
            <person name="Xi Y."/>
            <person name="Qi Q."/>
            <person name="Li W."/>
            <person name="Zhang B."/>
            <person name="Hu W."/>
            <person name="Zhang Y."/>
            <person name="Tian X."/>
            <person name="Jiao Y."/>
            <person name="Liang X."/>
            <person name="Jin J."/>
            <person name="Gao L."/>
            <person name="Zheng W."/>
            <person name="Hao B."/>
            <person name="Liu S.-M."/>
            <person name="Wang W."/>
            <person name="Yuan L."/>
            <person name="Cao M."/>
            <person name="McDermott J."/>
            <person name="Samudrala R."/>
            <person name="Wang J."/>
            <person name="Wong G.K.-S."/>
            <person name="Yang H."/>
        </authorList>
    </citation>
    <scope>NUCLEOTIDE SEQUENCE [LARGE SCALE GENOMIC DNA]</scope>
    <source>
        <strain>cv. Nipponbare</strain>
    </source>
</reference>
<reference key="5">
    <citation type="journal article" date="2003" name="Science">
        <title>Collection, mapping, and annotation of over 28,000 cDNA clones from japonica rice.</title>
        <authorList>
            <consortium name="The rice full-length cDNA consortium"/>
        </authorList>
    </citation>
    <scope>NUCLEOTIDE SEQUENCE [LARGE SCALE MRNA]</scope>
    <source>
        <strain>cv. Nipponbare</strain>
    </source>
</reference>
<reference key="6">
    <citation type="journal article" date="2008" name="BMC Genomics">
        <title>Genome-wide analysis of CCCH zinc finger family in Arabidopsis and rice.</title>
        <authorList>
            <person name="Wang D."/>
            <person name="Guo Y."/>
            <person name="Wu C."/>
            <person name="Yang G."/>
            <person name="Li Y."/>
            <person name="Zheng C."/>
        </authorList>
    </citation>
    <scope>NOMENCLATURE</scope>
</reference>
<proteinExistence type="evidence at transcript level"/>
<name>C3H3_ORYSJ</name>
<protein>
    <recommendedName>
        <fullName>Zinc finger CCCH domain-containing protein 3</fullName>
        <shortName>OsC3H3</shortName>
    </recommendedName>
</protein>
<evidence type="ECO:0000255" key="1">
    <source>
        <dbReference type="PROSITE-ProRule" id="PRU00723"/>
    </source>
</evidence>
<evidence type="ECO:0000256" key="2">
    <source>
        <dbReference type="SAM" id="MobiDB-lite"/>
    </source>
</evidence>
<evidence type="ECO:0000305" key="3"/>
<evidence type="ECO:0000312" key="4">
    <source>
        <dbReference type="EMBL" id="EEE54245.1"/>
    </source>
</evidence>
<gene>
    <name type="ordered locus">Os01g0252200</name>
    <name type="ordered locus">LOC_Os01g14870</name>
    <name evidence="4" type="ORF">OsJ_01120</name>
</gene>
<feature type="chain" id="PRO_0000346802" description="Zinc finger CCCH domain-containing protein 3">
    <location>
        <begin position="1"/>
        <end position="167"/>
    </location>
</feature>
<feature type="zinc finger region" description="C3H1-type" evidence="1">
    <location>
        <begin position="63"/>
        <end position="91"/>
    </location>
</feature>
<feature type="region of interest" description="Disordered" evidence="2">
    <location>
        <begin position="89"/>
        <end position="167"/>
    </location>
</feature>
<feature type="compositionally biased region" description="Pro residues" evidence="2">
    <location>
        <begin position="89"/>
        <end position="101"/>
    </location>
</feature>
<feature type="compositionally biased region" description="Polar residues" evidence="2">
    <location>
        <begin position="108"/>
        <end position="120"/>
    </location>
</feature>
<feature type="compositionally biased region" description="Pro residues" evidence="2">
    <location>
        <begin position="149"/>
        <end position="167"/>
    </location>
</feature>
<keyword id="KW-0238">DNA-binding</keyword>
<keyword id="KW-0479">Metal-binding</keyword>
<keyword id="KW-1185">Reference proteome</keyword>
<keyword id="KW-0862">Zinc</keyword>
<keyword id="KW-0863">Zinc-finger</keyword>